<sequence>MQDIQLDTLLSEDVTPENASQVMQALSQSLNEHNIRYYVDDAPSITDSEYDRLMQRLLKLEALYPHLIVADSPTQRVGGLALAKFDQITHLKPMLSLDNAFDEADFSAFHKRVTDKVGEVSFCCEPKLDGLAVSILYRHGVLERAATRGDGSVGEDITENVKTIKSIPLKLRGNDFPELVEVRGEAFMPKAAFEALNDRARAKDEKLFVNPRNAAAGSLRQLDSKITAARSLAFYAYALGVVEPDSHPLAKTHFEQLQQLKSWGLPVSSEIKVCAELSQVYDYYKDILTRRSDLAFEIDGVVMKVNDIDQQQRLGFVAKSPRWAIAYKFPAQEEMTLLEGVDFQVGRTGAVTPVARLKPVFVGGVTVSNATLHNANEIARLGIKVGDTVIIRRAGDVIPQIVAIVPERRPETATDIVFPHNCPVCGSLVERLEGEAVARCSGGLFCEAQRKEAIKHFASRKALDIDGMGDKVVEQLIDKELVQSPADLFKLTASMMTMLDRMGMKSATNLAAAIEAAKTTTLARFLYALGIREVGEATAANLAAHFASLDALRVATVEQLTEVEDVGAVVAQHVAHFFAQPHNLEVIDALIAAGVHWPAIEAPSAEAQPLKGQTWVLTGTLNQLNRNDAKAQLQALGAKVAGSVSKNTDCLVAGEAAGSKLAKAQELGVKVMDEDELLALLAANA</sequence>
<accession>B8EEK5</accession>
<protein>
    <recommendedName>
        <fullName evidence="1">DNA ligase</fullName>
        <ecNumber evidence="1">6.5.1.2</ecNumber>
    </recommendedName>
    <alternativeName>
        <fullName evidence="1">Polydeoxyribonucleotide synthase [NAD(+)]</fullName>
    </alternativeName>
</protein>
<feature type="chain" id="PRO_0000380469" description="DNA ligase">
    <location>
        <begin position="1"/>
        <end position="685"/>
    </location>
</feature>
<feature type="domain" description="BRCT" evidence="1">
    <location>
        <begin position="605"/>
        <end position="685"/>
    </location>
</feature>
<feature type="active site" description="N6-AMP-lysine intermediate" evidence="1">
    <location>
        <position position="127"/>
    </location>
</feature>
<feature type="binding site" evidence="1">
    <location>
        <begin position="47"/>
        <end position="51"/>
    </location>
    <ligand>
        <name>NAD(+)</name>
        <dbReference type="ChEBI" id="CHEBI:57540"/>
    </ligand>
</feature>
<feature type="binding site" evidence="1">
    <location>
        <begin position="96"/>
        <end position="97"/>
    </location>
    <ligand>
        <name>NAD(+)</name>
        <dbReference type="ChEBI" id="CHEBI:57540"/>
    </ligand>
</feature>
<feature type="binding site" evidence="1">
    <location>
        <position position="125"/>
    </location>
    <ligand>
        <name>NAD(+)</name>
        <dbReference type="ChEBI" id="CHEBI:57540"/>
    </ligand>
</feature>
<feature type="binding site" evidence="1">
    <location>
        <position position="148"/>
    </location>
    <ligand>
        <name>NAD(+)</name>
        <dbReference type="ChEBI" id="CHEBI:57540"/>
    </ligand>
</feature>
<feature type="binding site" evidence="1">
    <location>
        <position position="185"/>
    </location>
    <ligand>
        <name>NAD(+)</name>
        <dbReference type="ChEBI" id="CHEBI:57540"/>
    </ligand>
</feature>
<feature type="binding site" evidence="1">
    <location>
        <position position="304"/>
    </location>
    <ligand>
        <name>NAD(+)</name>
        <dbReference type="ChEBI" id="CHEBI:57540"/>
    </ligand>
</feature>
<feature type="binding site" evidence="1">
    <location>
        <position position="328"/>
    </location>
    <ligand>
        <name>NAD(+)</name>
        <dbReference type="ChEBI" id="CHEBI:57540"/>
    </ligand>
</feature>
<feature type="binding site" evidence="1">
    <location>
        <position position="422"/>
    </location>
    <ligand>
        <name>Zn(2+)</name>
        <dbReference type="ChEBI" id="CHEBI:29105"/>
    </ligand>
</feature>
<feature type="binding site" evidence="1">
    <location>
        <position position="425"/>
    </location>
    <ligand>
        <name>Zn(2+)</name>
        <dbReference type="ChEBI" id="CHEBI:29105"/>
    </ligand>
</feature>
<feature type="binding site" evidence="1">
    <location>
        <position position="440"/>
    </location>
    <ligand>
        <name>Zn(2+)</name>
        <dbReference type="ChEBI" id="CHEBI:29105"/>
    </ligand>
</feature>
<feature type="binding site" evidence="1">
    <location>
        <position position="446"/>
    </location>
    <ligand>
        <name>Zn(2+)</name>
        <dbReference type="ChEBI" id="CHEBI:29105"/>
    </ligand>
</feature>
<gene>
    <name evidence="1" type="primary">ligA</name>
    <name type="ordered locus">Sbal223_1705</name>
</gene>
<keyword id="KW-0227">DNA damage</keyword>
<keyword id="KW-0234">DNA repair</keyword>
<keyword id="KW-0235">DNA replication</keyword>
<keyword id="KW-0436">Ligase</keyword>
<keyword id="KW-0460">Magnesium</keyword>
<keyword id="KW-0464">Manganese</keyword>
<keyword id="KW-0479">Metal-binding</keyword>
<keyword id="KW-0520">NAD</keyword>
<keyword id="KW-0862">Zinc</keyword>
<comment type="function">
    <text evidence="1">DNA ligase that catalyzes the formation of phosphodiester linkages between 5'-phosphoryl and 3'-hydroxyl groups in double-stranded DNA using NAD as a coenzyme and as the energy source for the reaction. It is essential for DNA replication and repair of damaged DNA.</text>
</comment>
<comment type="catalytic activity">
    <reaction evidence="1">
        <text>NAD(+) + (deoxyribonucleotide)n-3'-hydroxyl + 5'-phospho-(deoxyribonucleotide)m = (deoxyribonucleotide)n+m + AMP + beta-nicotinamide D-nucleotide.</text>
        <dbReference type="EC" id="6.5.1.2"/>
    </reaction>
</comment>
<comment type="cofactor">
    <cofactor evidence="1">
        <name>Mg(2+)</name>
        <dbReference type="ChEBI" id="CHEBI:18420"/>
    </cofactor>
    <cofactor evidence="1">
        <name>Mn(2+)</name>
        <dbReference type="ChEBI" id="CHEBI:29035"/>
    </cofactor>
</comment>
<comment type="similarity">
    <text evidence="1">Belongs to the NAD-dependent DNA ligase family. LigA subfamily.</text>
</comment>
<evidence type="ECO:0000255" key="1">
    <source>
        <dbReference type="HAMAP-Rule" id="MF_01588"/>
    </source>
</evidence>
<organism>
    <name type="scientific">Shewanella baltica (strain OS223)</name>
    <dbReference type="NCBI Taxonomy" id="407976"/>
    <lineage>
        <taxon>Bacteria</taxon>
        <taxon>Pseudomonadati</taxon>
        <taxon>Pseudomonadota</taxon>
        <taxon>Gammaproteobacteria</taxon>
        <taxon>Alteromonadales</taxon>
        <taxon>Shewanellaceae</taxon>
        <taxon>Shewanella</taxon>
    </lineage>
</organism>
<proteinExistence type="inferred from homology"/>
<reference key="1">
    <citation type="submission" date="2008-12" db="EMBL/GenBank/DDBJ databases">
        <title>Complete sequence of chromosome of Shewanella baltica OS223.</title>
        <authorList>
            <consortium name="US DOE Joint Genome Institute"/>
            <person name="Lucas S."/>
            <person name="Copeland A."/>
            <person name="Lapidus A."/>
            <person name="Glavina del Rio T."/>
            <person name="Dalin E."/>
            <person name="Tice H."/>
            <person name="Bruce D."/>
            <person name="Goodwin L."/>
            <person name="Pitluck S."/>
            <person name="Chertkov O."/>
            <person name="Meincke L."/>
            <person name="Brettin T."/>
            <person name="Detter J.C."/>
            <person name="Han C."/>
            <person name="Kuske C.R."/>
            <person name="Larimer F."/>
            <person name="Land M."/>
            <person name="Hauser L."/>
            <person name="Kyrpides N."/>
            <person name="Ovchinnikova G."/>
            <person name="Brettar I."/>
            <person name="Rodrigues J."/>
            <person name="Konstantinidis K."/>
            <person name="Tiedje J."/>
        </authorList>
    </citation>
    <scope>NUCLEOTIDE SEQUENCE [LARGE SCALE GENOMIC DNA]</scope>
    <source>
        <strain>OS223</strain>
    </source>
</reference>
<name>DNLJ_SHEB2</name>
<dbReference type="EC" id="6.5.1.2" evidence="1"/>
<dbReference type="EMBL" id="CP001252">
    <property type="protein sequence ID" value="ACK46210.1"/>
    <property type="molecule type" value="Genomic_DNA"/>
</dbReference>
<dbReference type="RefSeq" id="WP_012587385.1">
    <property type="nucleotide sequence ID" value="NC_011663.1"/>
</dbReference>
<dbReference type="SMR" id="B8EEK5"/>
<dbReference type="KEGG" id="sbp:Sbal223_1705"/>
<dbReference type="HOGENOM" id="CLU_007764_2_1_6"/>
<dbReference type="Proteomes" id="UP000002507">
    <property type="component" value="Chromosome"/>
</dbReference>
<dbReference type="GO" id="GO:0005829">
    <property type="term" value="C:cytosol"/>
    <property type="evidence" value="ECO:0007669"/>
    <property type="project" value="TreeGrafter"/>
</dbReference>
<dbReference type="GO" id="GO:0003677">
    <property type="term" value="F:DNA binding"/>
    <property type="evidence" value="ECO:0007669"/>
    <property type="project" value="InterPro"/>
</dbReference>
<dbReference type="GO" id="GO:0003911">
    <property type="term" value="F:DNA ligase (NAD+) activity"/>
    <property type="evidence" value="ECO:0007669"/>
    <property type="project" value="UniProtKB-UniRule"/>
</dbReference>
<dbReference type="GO" id="GO:0046872">
    <property type="term" value="F:metal ion binding"/>
    <property type="evidence" value="ECO:0007669"/>
    <property type="project" value="UniProtKB-KW"/>
</dbReference>
<dbReference type="GO" id="GO:0006281">
    <property type="term" value="P:DNA repair"/>
    <property type="evidence" value="ECO:0007669"/>
    <property type="project" value="UniProtKB-KW"/>
</dbReference>
<dbReference type="GO" id="GO:0006260">
    <property type="term" value="P:DNA replication"/>
    <property type="evidence" value="ECO:0007669"/>
    <property type="project" value="UniProtKB-KW"/>
</dbReference>
<dbReference type="CDD" id="cd17748">
    <property type="entry name" value="BRCT_DNA_ligase_like"/>
    <property type="match status" value="1"/>
</dbReference>
<dbReference type="CDD" id="cd00114">
    <property type="entry name" value="LIGANc"/>
    <property type="match status" value="1"/>
</dbReference>
<dbReference type="FunFam" id="1.10.150.20:FF:000006">
    <property type="entry name" value="DNA ligase"/>
    <property type="match status" value="1"/>
</dbReference>
<dbReference type="FunFam" id="1.10.150.20:FF:000007">
    <property type="entry name" value="DNA ligase"/>
    <property type="match status" value="1"/>
</dbReference>
<dbReference type="FunFam" id="1.10.287.610:FF:000002">
    <property type="entry name" value="DNA ligase"/>
    <property type="match status" value="1"/>
</dbReference>
<dbReference type="FunFam" id="2.40.50.140:FF:000012">
    <property type="entry name" value="DNA ligase"/>
    <property type="match status" value="1"/>
</dbReference>
<dbReference type="FunFam" id="3.30.470.30:FF:000001">
    <property type="entry name" value="DNA ligase"/>
    <property type="match status" value="1"/>
</dbReference>
<dbReference type="Gene3D" id="6.20.10.30">
    <property type="match status" value="1"/>
</dbReference>
<dbReference type="Gene3D" id="1.10.150.20">
    <property type="entry name" value="5' to 3' exonuclease, C-terminal subdomain"/>
    <property type="match status" value="2"/>
</dbReference>
<dbReference type="Gene3D" id="3.40.50.10190">
    <property type="entry name" value="BRCT domain"/>
    <property type="match status" value="1"/>
</dbReference>
<dbReference type="Gene3D" id="3.30.470.30">
    <property type="entry name" value="DNA ligase/mRNA capping enzyme"/>
    <property type="match status" value="1"/>
</dbReference>
<dbReference type="Gene3D" id="1.10.287.610">
    <property type="entry name" value="Helix hairpin bin"/>
    <property type="match status" value="1"/>
</dbReference>
<dbReference type="Gene3D" id="2.40.50.140">
    <property type="entry name" value="Nucleic acid-binding proteins"/>
    <property type="match status" value="1"/>
</dbReference>
<dbReference type="HAMAP" id="MF_01588">
    <property type="entry name" value="DNA_ligase_A"/>
    <property type="match status" value="1"/>
</dbReference>
<dbReference type="InterPro" id="IPR001357">
    <property type="entry name" value="BRCT_dom"/>
</dbReference>
<dbReference type="InterPro" id="IPR036420">
    <property type="entry name" value="BRCT_dom_sf"/>
</dbReference>
<dbReference type="InterPro" id="IPR041663">
    <property type="entry name" value="DisA/LigA_HHH"/>
</dbReference>
<dbReference type="InterPro" id="IPR001679">
    <property type="entry name" value="DNA_ligase"/>
</dbReference>
<dbReference type="InterPro" id="IPR018239">
    <property type="entry name" value="DNA_ligase_AS"/>
</dbReference>
<dbReference type="InterPro" id="IPR033136">
    <property type="entry name" value="DNA_ligase_CS"/>
</dbReference>
<dbReference type="InterPro" id="IPR013839">
    <property type="entry name" value="DNAligase_adenylation"/>
</dbReference>
<dbReference type="InterPro" id="IPR013840">
    <property type="entry name" value="DNAligase_N"/>
</dbReference>
<dbReference type="InterPro" id="IPR003583">
    <property type="entry name" value="Hlx-hairpin-Hlx_DNA-bd_motif"/>
</dbReference>
<dbReference type="InterPro" id="IPR012340">
    <property type="entry name" value="NA-bd_OB-fold"/>
</dbReference>
<dbReference type="InterPro" id="IPR004150">
    <property type="entry name" value="NAD_DNA_ligase_OB"/>
</dbReference>
<dbReference type="InterPro" id="IPR010994">
    <property type="entry name" value="RuvA_2-like"/>
</dbReference>
<dbReference type="InterPro" id="IPR004149">
    <property type="entry name" value="Znf_DNAligase_C4"/>
</dbReference>
<dbReference type="NCBIfam" id="TIGR00575">
    <property type="entry name" value="dnlj"/>
    <property type="match status" value="1"/>
</dbReference>
<dbReference type="NCBIfam" id="NF005932">
    <property type="entry name" value="PRK07956.1"/>
    <property type="match status" value="1"/>
</dbReference>
<dbReference type="PANTHER" id="PTHR23389">
    <property type="entry name" value="CHROMOSOME TRANSMISSION FIDELITY FACTOR 18"/>
    <property type="match status" value="1"/>
</dbReference>
<dbReference type="PANTHER" id="PTHR23389:SF9">
    <property type="entry name" value="DNA LIGASE"/>
    <property type="match status" value="1"/>
</dbReference>
<dbReference type="Pfam" id="PF00533">
    <property type="entry name" value="BRCT"/>
    <property type="match status" value="1"/>
</dbReference>
<dbReference type="Pfam" id="PF01653">
    <property type="entry name" value="DNA_ligase_aden"/>
    <property type="match status" value="1"/>
</dbReference>
<dbReference type="Pfam" id="PF03120">
    <property type="entry name" value="DNA_ligase_OB"/>
    <property type="match status" value="1"/>
</dbReference>
<dbReference type="Pfam" id="PF03119">
    <property type="entry name" value="DNA_ligase_ZBD"/>
    <property type="match status" value="1"/>
</dbReference>
<dbReference type="Pfam" id="PF12826">
    <property type="entry name" value="HHH_2"/>
    <property type="match status" value="1"/>
</dbReference>
<dbReference type="PIRSF" id="PIRSF001604">
    <property type="entry name" value="LigA"/>
    <property type="match status" value="1"/>
</dbReference>
<dbReference type="SMART" id="SM00292">
    <property type="entry name" value="BRCT"/>
    <property type="match status" value="1"/>
</dbReference>
<dbReference type="SMART" id="SM00278">
    <property type="entry name" value="HhH1"/>
    <property type="match status" value="3"/>
</dbReference>
<dbReference type="SMART" id="SM00532">
    <property type="entry name" value="LIGANc"/>
    <property type="match status" value="1"/>
</dbReference>
<dbReference type="SUPFAM" id="SSF52113">
    <property type="entry name" value="BRCT domain"/>
    <property type="match status" value="1"/>
</dbReference>
<dbReference type="SUPFAM" id="SSF56091">
    <property type="entry name" value="DNA ligase/mRNA capping enzyme, catalytic domain"/>
    <property type="match status" value="1"/>
</dbReference>
<dbReference type="SUPFAM" id="SSF50249">
    <property type="entry name" value="Nucleic acid-binding proteins"/>
    <property type="match status" value="1"/>
</dbReference>
<dbReference type="SUPFAM" id="SSF47781">
    <property type="entry name" value="RuvA domain 2-like"/>
    <property type="match status" value="1"/>
</dbReference>
<dbReference type="PROSITE" id="PS50172">
    <property type="entry name" value="BRCT"/>
    <property type="match status" value="1"/>
</dbReference>
<dbReference type="PROSITE" id="PS01055">
    <property type="entry name" value="DNA_LIGASE_N1"/>
    <property type="match status" value="1"/>
</dbReference>
<dbReference type="PROSITE" id="PS01056">
    <property type="entry name" value="DNA_LIGASE_N2"/>
    <property type="match status" value="1"/>
</dbReference>